<gene>
    <name type="ordered locus">SynWH7803_2315</name>
</gene>
<protein>
    <recommendedName>
        <fullName evidence="1">1,4-dihydroxy-2-naphthoyl-CoA hydrolase</fullName>
        <shortName evidence="1">DHNA-CoA hydrolase</shortName>
        <ecNumber evidence="1">3.1.2.28</ecNumber>
    </recommendedName>
    <alternativeName>
        <fullName evidence="1">DHNA-CoA thioesterase</fullName>
    </alternativeName>
</protein>
<dbReference type="EC" id="3.1.2.28" evidence="1"/>
<dbReference type="EMBL" id="CT971583">
    <property type="protein sequence ID" value="CAK24741.1"/>
    <property type="molecule type" value="Genomic_DNA"/>
</dbReference>
<dbReference type="SMR" id="A5GP76"/>
<dbReference type="STRING" id="32051.SynWH7803_2315"/>
<dbReference type="KEGG" id="syx:SynWH7803_2315"/>
<dbReference type="eggNOG" id="COG0824">
    <property type="taxonomic scope" value="Bacteria"/>
</dbReference>
<dbReference type="HOGENOM" id="CLU_101141_5_3_3"/>
<dbReference type="OrthoDB" id="9800856at2"/>
<dbReference type="UniPathway" id="UPA00995"/>
<dbReference type="UniPathway" id="UPA01057">
    <property type="reaction ID" value="UER01033"/>
</dbReference>
<dbReference type="Proteomes" id="UP000001566">
    <property type="component" value="Chromosome"/>
</dbReference>
<dbReference type="GO" id="GO:0061522">
    <property type="term" value="F:1,4-dihydroxy-2-naphthoyl-CoA thioesterase activity"/>
    <property type="evidence" value="ECO:0007669"/>
    <property type="project" value="UniProtKB-EC"/>
</dbReference>
<dbReference type="GO" id="GO:0047617">
    <property type="term" value="F:fatty acyl-CoA hydrolase activity"/>
    <property type="evidence" value="ECO:0007669"/>
    <property type="project" value="TreeGrafter"/>
</dbReference>
<dbReference type="GO" id="GO:0042372">
    <property type="term" value="P:phylloquinone biosynthetic process"/>
    <property type="evidence" value="ECO:0007669"/>
    <property type="project" value="UniProtKB-UniRule"/>
</dbReference>
<dbReference type="CDD" id="cd00586">
    <property type="entry name" value="4HBT"/>
    <property type="match status" value="1"/>
</dbReference>
<dbReference type="Gene3D" id="3.10.129.10">
    <property type="entry name" value="Hotdog Thioesterase"/>
    <property type="match status" value="1"/>
</dbReference>
<dbReference type="HAMAP" id="MF_02101">
    <property type="entry name" value="DHNA_CoA_hydrolase"/>
    <property type="match status" value="1"/>
</dbReference>
<dbReference type="InterPro" id="IPR050563">
    <property type="entry name" value="4-hydroxybenzoyl-CoA_TE"/>
</dbReference>
<dbReference type="InterPro" id="IPR022829">
    <property type="entry name" value="DHNA_CoA_hydrolase"/>
</dbReference>
<dbReference type="InterPro" id="IPR029069">
    <property type="entry name" value="HotDog_dom_sf"/>
</dbReference>
<dbReference type="PANTHER" id="PTHR31793">
    <property type="entry name" value="4-HYDROXYBENZOYL-COA THIOESTERASE FAMILY MEMBER"/>
    <property type="match status" value="1"/>
</dbReference>
<dbReference type="PANTHER" id="PTHR31793:SF37">
    <property type="entry name" value="ACYL-COA THIOESTER HYDROLASE YBGC"/>
    <property type="match status" value="1"/>
</dbReference>
<dbReference type="Pfam" id="PF13279">
    <property type="entry name" value="4HBT_2"/>
    <property type="match status" value="1"/>
</dbReference>
<dbReference type="SUPFAM" id="SSF54637">
    <property type="entry name" value="Thioesterase/thiol ester dehydrase-isomerase"/>
    <property type="match status" value="1"/>
</dbReference>
<comment type="function">
    <text evidence="1">Catalyzes the hydrolysis of 1,4-dihydroxy-2-naphthoyl-CoA (DHNA-CoA) to 1,4-dihydroxy-2-naphthoate (DHNA), a reaction involved in phylloquinone (vitamin K1) biosynthesis.</text>
</comment>
<comment type="catalytic activity">
    <reaction evidence="1">
        <text>1,4-dihydroxy-2-naphthoyl-CoA + H2O = 1,4-dihydroxy-2-naphthoate + CoA + H(+)</text>
        <dbReference type="Rhea" id="RHEA:26309"/>
        <dbReference type="ChEBI" id="CHEBI:11173"/>
        <dbReference type="ChEBI" id="CHEBI:15377"/>
        <dbReference type="ChEBI" id="CHEBI:15378"/>
        <dbReference type="ChEBI" id="CHEBI:57287"/>
        <dbReference type="ChEBI" id="CHEBI:58897"/>
        <dbReference type="EC" id="3.1.2.28"/>
    </reaction>
</comment>
<comment type="pathway">
    <text evidence="1">Cofactor biosynthesis; phylloquinone biosynthesis.</text>
</comment>
<comment type="pathway">
    <text evidence="1">Quinol/quinone metabolism; 1,4-dihydroxy-2-naphthoate biosynthesis; 1,4-dihydroxy-2-naphthoate from chorismate: step 7/7.</text>
</comment>
<comment type="similarity">
    <text evidence="1">Belongs to the 4-hydroxybenzoyl-CoA thioesterase family. DHNA-CoA hydrolase subfamily.</text>
</comment>
<reference key="1">
    <citation type="submission" date="2006-05" db="EMBL/GenBank/DDBJ databases">
        <authorList>
            <consortium name="Genoscope"/>
        </authorList>
    </citation>
    <scope>NUCLEOTIDE SEQUENCE [LARGE SCALE GENOMIC DNA]</scope>
    <source>
        <strain>WH7803</strain>
    </source>
</reference>
<accession>A5GP76</accession>
<keyword id="KW-0378">Hydrolase</keyword>
<keyword id="KW-1185">Reference proteome</keyword>
<name>DNCH_SYNPW</name>
<organism>
    <name type="scientific">Synechococcus sp. (strain WH7803)</name>
    <dbReference type="NCBI Taxonomy" id="32051"/>
    <lineage>
        <taxon>Bacteria</taxon>
        <taxon>Bacillati</taxon>
        <taxon>Cyanobacteriota</taxon>
        <taxon>Cyanophyceae</taxon>
        <taxon>Synechococcales</taxon>
        <taxon>Synechococcaceae</taxon>
        <taxon>Synechococcus</taxon>
    </lineage>
</organism>
<evidence type="ECO:0000255" key="1">
    <source>
        <dbReference type="HAMAP-Rule" id="MF_02101"/>
    </source>
</evidence>
<proteinExistence type="inferred from homology"/>
<feature type="chain" id="PRO_0000377034" description="1,4-dihydroxy-2-naphthoyl-CoA hydrolase">
    <location>
        <begin position="1"/>
        <end position="153"/>
    </location>
</feature>
<feature type="active site" evidence="1">
    <location>
        <position position="21"/>
    </location>
</feature>
<sequence length="153" mass="17564">MIADSSSWLKLTKKVRFGDTDAAGVMHFHQLLRWCHEAWEESLERYGLEAQAVFPGCRGQEQWPAIALPVVHCRADFLRPVHGGDQLSLHLTPQRLDPSSFEVHHRFLLEQQDVAHGWIRHVAISTETRRRSALPDAIERWLEASLIGRISEL</sequence>